<feature type="chain" id="PRO_1000047866" description="Probable septum site-determining protein MinC">
    <location>
        <begin position="1"/>
        <end position="231"/>
    </location>
</feature>
<feature type="region of interest" description="Disordered" evidence="2">
    <location>
        <begin position="102"/>
        <end position="125"/>
    </location>
</feature>
<reference key="1">
    <citation type="journal article" date="2005" name="Nucleic Acids Res.">
        <title>Genome dynamics and diversity of Shigella species, the etiologic agents of bacillary dysentery.</title>
        <authorList>
            <person name="Yang F."/>
            <person name="Yang J."/>
            <person name="Zhang X."/>
            <person name="Chen L."/>
            <person name="Jiang Y."/>
            <person name="Yan Y."/>
            <person name="Tang X."/>
            <person name="Wang J."/>
            <person name="Xiong Z."/>
            <person name="Dong J."/>
            <person name="Xue Y."/>
            <person name="Zhu Y."/>
            <person name="Xu X."/>
            <person name="Sun L."/>
            <person name="Chen S."/>
            <person name="Nie H."/>
            <person name="Peng J."/>
            <person name="Xu J."/>
            <person name="Wang Y."/>
            <person name="Yuan Z."/>
            <person name="Wen Y."/>
            <person name="Yao Z."/>
            <person name="Shen Y."/>
            <person name="Qiang B."/>
            <person name="Hou Y."/>
            <person name="Yu J."/>
            <person name="Jin Q."/>
        </authorList>
    </citation>
    <scope>NUCLEOTIDE SEQUENCE [LARGE SCALE GENOMIC DNA]</scope>
    <source>
        <strain>Sd197</strain>
    </source>
</reference>
<name>MINC_SHIDS</name>
<comment type="function">
    <text evidence="1">Cell division inhibitor that blocks the formation of polar Z ring septums. Rapidly oscillates between the poles of the cell to destabilize FtsZ filaments that have formed before they mature into polar Z rings. Prevents FtsZ polymerization.</text>
</comment>
<comment type="subunit">
    <text evidence="1">Interacts with MinD and FtsZ.</text>
</comment>
<comment type="similarity">
    <text evidence="1">Belongs to the MinC family.</text>
</comment>
<keyword id="KW-0131">Cell cycle</keyword>
<keyword id="KW-0132">Cell division</keyword>
<keyword id="KW-1185">Reference proteome</keyword>
<keyword id="KW-0717">Septation</keyword>
<sequence>MSNTPIELKGSSFTLSVVHLHEAEPKVIHQALEDKIAQAPAFLKHAPVVLNVSALEDPVNWSAMHKAVSATGLRVIGVSGCKDAQLKAEIEKMGLPILTEGKEKAPRPAPAPQAPAQNTTPVTKTRLIDTPVRSGQRIYAPQCDLIVTSHVSAGAELIADGNIHVYGMMRGRALAGASGDRETQIFCTNLMAELVSIAGEYWLSDQIPAEFYGKAARLQLVENALTVQPLN</sequence>
<gene>
    <name evidence="1" type="primary">minC</name>
    <name type="ordered locus">SDY_1207</name>
</gene>
<organism>
    <name type="scientific">Shigella dysenteriae serotype 1 (strain Sd197)</name>
    <dbReference type="NCBI Taxonomy" id="300267"/>
    <lineage>
        <taxon>Bacteria</taxon>
        <taxon>Pseudomonadati</taxon>
        <taxon>Pseudomonadota</taxon>
        <taxon>Gammaproteobacteria</taxon>
        <taxon>Enterobacterales</taxon>
        <taxon>Enterobacteriaceae</taxon>
        <taxon>Shigella</taxon>
    </lineage>
</organism>
<evidence type="ECO:0000255" key="1">
    <source>
        <dbReference type="HAMAP-Rule" id="MF_00267"/>
    </source>
</evidence>
<evidence type="ECO:0000256" key="2">
    <source>
        <dbReference type="SAM" id="MobiDB-lite"/>
    </source>
</evidence>
<proteinExistence type="inferred from homology"/>
<dbReference type="EMBL" id="CP000034">
    <property type="protein sequence ID" value="ABB61360.1"/>
    <property type="molecule type" value="Genomic_DNA"/>
</dbReference>
<dbReference type="RefSeq" id="WP_000072536.1">
    <property type="nucleotide sequence ID" value="NC_007606.1"/>
</dbReference>
<dbReference type="RefSeq" id="YP_402851.1">
    <property type="nucleotide sequence ID" value="NC_007606.1"/>
</dbReference>
<dbReference type="SMR" id="Q32H45"/>
<dbReference type="STRING" id="300267.SDY_1207"/>
<dbReference type="EnsemblBacteria" id="ABB61360">
    <property type="protein sequence ID" value="ABB61360"/>
    <property type="gene ID" value="SDY_1207"/>
</dbReference>
<dbReference type="GeneID" id="93776258"/>
<dbReference type="KEGG" id="sdy:SDY_1207"/>
<dbReference type="PATRIC" id="fig|300267.13.peg.1430"/>
<dbReference type="HOGENOM" id="CLU_067812_0_1_6"/>
<dbReference type="Proteomes" id="UP000002716">
    <property type="component" value="Chromosome"/>
</dbReference>
<dbReference type="GO" id="GO:0000902">
    <property type="term" value="P:cell morphogenesis"/>
    <property type="evidence" value="ECO:0007669"/>
    <property type="project" value="InterPro"/>
</dbReference>
<dbReference type="GO" id="GO:0000917">
    <property type="term" value="P:division septum assembly"/>
    <property type="evidence" value="ECO:0007669"/>
    <property type="project" value="UniProtKB-KW"/>
</dbReference>
<dbReference type="GO" id="GO:0051302">
    <property type="term" value="P:regulation of cell division"/>
    <property type="evidence" value="ECO:0007669"/>
    <property type="project" value="InterPro"/>
</dbReference>
<dbReference type="GO" id="GO:1901891">
    <property type="term" value="P:regulation of cell septum assembly"/>
    <property type="evidence" value="ECO:0007669"/>
    <property type="project" value="InterPro"/>
</dbReference>
<dbReference type="FunFam" id="2.160.20.70:FF:000002">
    <property type="entry name" value="Probable septum site-determining protein MinC"/>
    <property type="match status" value="1"/>
</dbReference>
<dbReference type="Gene3D" id="2.160.20.70">
    <property type="match status" value="1"/>
</dbReference>
<dbReference type="Gene3D" id="3.30.70.260">
    <property type="match status" value="1"/>
</dbReference>
<dbReference type="HAMAP" id="MF_00267">
    <property type="entry name" value="MinC"/>
    <property type="match status" value="1"/>
</dbReference>
<dbReference type="InterPro" id="IPR016098">
    <property type="entry name" value="CAP/MinC_C"/>
</dbReference>
<dbReference type="InterPro" id="IPR013033">
    <property type="entry name" value="MinC"/>
</dbReference>
<dbReference type="InterPro" id="IPR036145">
    <property type="entry name" value="MinC_C_sf"/>
</dbReference>
<dbReference type="InterPro" id="IPR007874">
    <property type="entry name" value="MinC_N"/>
</dbReference>
<dbReference type="InterPro" id="IPR005526">
    <property type="entry name" value="Septum_form_inhib_MinC_C"/>
</dbReference>
<dbReference type="NCBIfam" id="TIGR01222">
    <property type="entry name" value="minC"/>
    <property type="match status" value="1"/>
</dbReference>
<dbReference type="PANTHER" id="PTHR34108">
    <property type="entry name" value="SEPTUM SITE-DETERMINING PROTEIN MINC"/>
    <property type="match status" value="1"/>
</dbReference>
<dbReference type="PANTHER" id="PTHR34108:SF1">
    <property type="entry name" value="SEPTUM SITE-DETERMINING PROTEIN MINC"/>
    <property type="match status" value="1"/>
</dbReference>
<dbReference type="Pfam" id="PF03775">
    <property type="entry name" value="MinC_C"/>
    <property type="match status" value="1"/>
</dbReference>
<dbReference type="Pfam" id="PF05209">
    <property type="entry name" value="MinC_N"/>
    <property type="match status" value="1"/>
</dbReference>
<dbReference type="SUPFAM" id="SSF63848">
    <property type="entry name" value="Cell-division inhibitor MinC, C-terminal domain"/>
    <property type="match status" value="1"/>
</dbReference>
<accession>Q32H45</accession>
<protein>
    <recommendedName>
        <fullName evidence="1">Probable septum site-determining protein MinC</fullName>
    </recommendedName>
</protein>